<dbReference type="EMBL" id="CP000255">
    <property type="protein sequence ID" value="ABD22630.1"/>
    <property type="molecule type" value="Genomic_DNA"/>
</dbReference>
<dbReference type="RefSeq" id="WP_000273371.1">
    <property type="nucleotide sequence ID" value="NZ_CP027476.1"/>
</dbReference>
<dbReference type="SMR" id="Q2FGN7"/>
<dbReference type="KEGG" id="saa:SAUSA300_1445"/>
<dbReference type="HOGENOM" id="CLU_038686_3_1_9"/>
<dbReference type="Proteomes" id="UP000001939">
    <property type="component" value="Chromosome"/>
</dbReference>
<dbReference type="GO" id="GO:0005737">
    <property type="term" value="C:cytoplasm"/>
    <property type="evidence" value="ECO:0007669"/>
    <property type="project" value="UniProtKB-SubCell"/>
</dbReference>
<dbReference type="GO" id="GO:0051301">
    <property type="term" value="P:cell division"/>
    <property type="evidence" value="ECO:0007669"/>
    <property type="project" value="UniProtKB-KW"/>
</dbReference>
<dbReference type="GO" id="GO:0007059">
    <property type="term" value="P:chromosome segregation"/>
    <property type="evidence" value="ECO:0007669"/>
    <property type="project" value="UniProtKB-UniRule"/>
</dbReference>
<dbReference type="GO" id="GO:0006260">
    <property type="term" value="P:DNA replication"/>
    <property type="evidence" value="ECO:0007669"/>
    <property type="project" value="UniProtKB-UniRule"/>
</dbReference>
<dbReference type="Gene3D" id="6.10.250.2410">
    <property type="match status" value="1"/>
</dbReference>
<dbReference type="Gene3D" id="1.10.10.580">
    <property type="entry name" value="Structural maintenance of chromosome 1. Chain E"/>
    <property type="match status" value="1"/>
</dbReference>
<dbReference type="HAMAP" id="MF_01805">
    <property type="entry name" value="ScpA"/>
    <property type="match status" value="1"/>
</dbReference>
<dbReference type="InterPro" id="IPR003768">
    <property type="entry name" value="ScpA"/>
</dbReference>
<dbReference type="InterPro" id="IPR023093">
    <property type="entry name" value="ScpA-like_C"/>
</dbReference>
<dbReference type="PANTHER" id="PTHR33969">
    <property type="entry name" value="SEGREGATION AND CONDENSATION PROTEIN A"/>
    <property type="match status" value="1"/>
</dbReference>
<dbReference type="PANTHER" id="PTHR33969:SF2">
    <property type="entry name" value="SEGREGATION AND CONDENSATION PROTEIN A"/>
    <property type="match status" value="1"/>
</dbReference>
<dbReference type="Pfam" id="PF02616">
    <property type="entry name" value="SMC_ScpA"/>
    <property type="match status" value="1"/>
</dbReference>
<organism>
    <name type="scientific">Staphylococcus aureus (strain USA300)</name>
    <dbReference type="NCBI Taxonomy" id="367830"/>
    <lineage>
        <taxon>Bacteria</taxon>
        <taxon>Bacillati</taxon>
        <taxon>Bacillota</taxon>
        <taxon>Bacilli</taxon>
        <taxon>Bacillales</taxon>
        <taxon>Staphylococcaceae</taxon>
        <taxon>Staphylococcus</taxon>
    </lineage>
</organism>
<evidence type="ECO:0000255" key="1">
    <source>
        <dbReference type="HAMAP-Rule" id="MF_01805"/>
    </source>
</evidence>
<accession>Q2FGN7</accession>
<comment type="function">
    <text evidence="1">Participates in chromosomal partition during cell division. May act via the formation of a condensin-like complex containing Smc and ScpB that pull DNA away from mid-cell into both cell halves.</text>
</comment>
<comment type="subunit">
    <text evidence="1">Component of a cohesin-like complex composed of ScpA, ScpB and the Smc homodimer, in which ScpA and ScpB bind to the head domain of Smc. The presence of the three proteins is required for the association of the complex with DNA.</text>
</comment>
<comment type="subcellular location">
    <subcellularLocation>
        <location evidence="1">Cytoplasm</location>
    </subcellularLocation>
    <text evidence="1">Associated with two foci at the outer edges of the nucleoid region in young cells, and at four foci within both cell halves in older cells.</text>
</comment>
<comment type="similarity">
    <text evidence="1">Belongs to the ScpA family.</text>
</comment>
<name>SCPA_STAA3</name>
<protein>
    <recommendedName>
        <fullName evidence="1">Segregation and condensation protein A</fullName>
    </recommendedName>
</protein>
<proteinExistence type="inferred from homology"/>
<reference key="1">
    <citation type="journal article" date="2006" name="Lancet">
        <title>Complete genome sequence of USA300, an epidemic clone of community-acquired meticillin-resistant Staphylococcus aureus.</title>
        <authorList>
            <person name="Diep B.A."/>
            <person name="Gill S.R."/>
            <person name="Chang R.F."/>
            <person name="Phan T.H."/>
            <person name="Chen J.H."/>
            <person name="Davidson M.G."/>
            <person name="Lin F."/>
            <person name="Lin J."/>
            <person name="Carleton H.A."/>
            <person name="Mongodin E.F."/>
            <person name="Sensabaugh G.F."/>
            <person name="Perdreau-Remington F."/>
        </authorList>
    </citation>
    <scope>NUCLEOTIDE SEQUENCE [LARGE SCALE GENOMIC DNA]</scope>
    <source>
        <strain>USA300</strain>
    </source>
</reference>
<gene>
    <name evidence="1" type="primary">scpA</name>
    <name type="ordered locus">SAUSA300_1445</name>
</gene>
<feature type="chain" id="PRO_1000069976" description="Segregation and condensation protein A">
    <location>
        <begin position="1"/>
        <end position="243"/>
    </location>
</feature>
<sequence>MYEVKLDAFNGPLDLLLHLIQKFEIDIYDIPMQALTEQYMQYVHAMKQLEINIASEYLVLASELLMIKSKMLLPQSTSDMDVDDDPREDLVGRLIEYQNYKEYTAILNDMKEERDFYFTKRPTDLSHLETDESWDPNHTIDLTELIVAYQRVKNRVELNTPKSVEIRKETFTIQQATEQVTSRLKDKDHFNFFSLFTFSEPIEQVVTHFLAILEMSKAGIINIEQQRNFEDINIIRGVNYHFG</sequence>
<keyword id="KW-0131">Cell cycle</keyword>
<keyword id="KW-0132">Cell division</keyword>
<keyword id="KW-0159">Chromosome partition</keyword>
<keyword id="KW-0963">Cytoplasm</keyword>